<gene>
    <name evidence="1" type="primary">panD</name>
    <name type="ordered locus">Swol_0103</name>
</gene>
<comment type="function">
    <text evidence="1">Catalyzes the pyruvoyl-dependent decarboxylation of aspartate to produce beta-alanine.</text>
</comment>
<comment type="catalytic activity">
    <reaction evidence="1">
        <text>L-aspartate + H(+) = beta-alanine + CO2</text>
        <dbReference type="Rhea" id="RHEA:19497"/>
        <dbReference type="ChEBI" id="CHEBI:15378"/>
        <dbReference type="ChEBI" id="CHEBI:16526"/>
        <dbReference type="ChEBI" id="CHEBI:29991"/>
        <dbReference type="ChEBI" id="CHEBI:57966"/>
        <dbReference type="EC" id="4.1.1.11"/>
    </reaction>
</comment>
<comment type="cofactor">
    <cofactor evidence="1">
        <name>pyruvate</name>
        <dbReference type="ChEBI" id="CHEBI:15361"/>
    </cofactor>
    <text evidence="1">Binds 1 pyruvoyl group covalently per subunit.</text>
</comment>
<comment type="pathway">
    <text evidence="1">Cofactor biosynthesis; (R)-pantothenate biosynthesis; beta-alanine from L-aspartate: step 1/1.</text>
</comment>
<comment type="subunit">
    <text evidence="1">Heterooctamer of four alpha and four beta subunits.</text>
</comment>
<comment type="subcellular location">
    <subcellularLocation>
        <location evidence="1">Cytoplasm</location>
    </subcellularLocation>
</comment>
<comment type="PTM">
    <text evidence="1">Is synthesized initially as an inactive proenzyme, which is activated by self-cleavage at a specific serine bond to produce a beta-subunit with a hydroxyl group at its C-terminus and an alpha-subunit with a pyruvoyl group at its N-terminus.</text>
</comment>
<comment type="similarity">
    <text evidence="1">Belongs to the PanD family.</text>
</comment>
<protein>
    <recommendedName>
        <fullName evidence="1">Aspartate 1-decarboxylase</fullName>
        <ecNumber evidence="1">4.1.1.11</ecNumber>
    </recommendedName>
    <alternativeName>
        <fullName evidence="1">Aspartate alpha-decarboxylase</fullName>
    </alternativeName>
    <component>
        <recommendedName>
            <fullName evidence="1">Aspartate 1-decarboxylase beta chain</fullName>
        </recommendedName>
    </component>
    <component>
        <recommendedName>
            <fullName evidence="1">Aspartate 1-decarboxylase alpha chain</fullName>
        </recommendedName>
    </component>
</protein>
<sequence length="118" mass="13209">MLRHMLKSKIHRAVVTDANLNYVGSITIDRDLMDAADILENEKVTIVNNNNGARFDTYVIEGERGSKVICLNGAASRLVQKGDVVIILTYTVLQDEECHNHKPRLVFMDGNNNIKELG</sequence>
<keyword id="KW-0068">Autocatalytic cleavage</keyword>
<keyword id="KW-0963">Cytoplasm</keyword>
<keyword id="KW-0210">Decarboxylase</keyword>
<keyword id="KW-0456">Lyase</keyword>
<keyword id="KW-0566">Pantothenate biosynthesis</keyword>
<keyword id="KW-0670">Pyruvate</keyword>
<keyword id="KW-1185">Reference proteome</keyword>
<keyword id="KW-0704">Schiff base</keyword>
<keyword id="KW-0865">Zymogen</keyword>
<feature type="chain" id="PRO_0000307075" description="Aspartate 1-decarboxylase beta chain" evidence="1">
    <location>
        <begin position="1"/>
        <end position="24"/>
    </location>
</feature>
<feature type="chain" id="PRO_0000307076" description="Aspartate 1-decarboxylase alpha chain" evidence="1">
    <location>
        <begin position="25"/>
        <end position="118"/>
    </location>
</feature>
<feature type="active site" description="Schiff-base intermediate with substrate; via pyruvic acid" evidence="1">
    <location>
        <position position="25"/>
    </location>
</feature>
<feature type="active site" description="Proton donor" evidence="1">
    <location>
        <position position="58"/>
    </location>
</feature>
<feature type="binding site" evidence="1">
    <location>
        <position position="57"/>
    </location>
    <ligand>
        <name>substrate</name>
    </ligand>
</feature>
<feature type="binding site" evidence="1">
    <location>
        <begin position="73"/>
        <end position="75"/>
    </location>
    <ligand>
        <name>substrate</name>
    </ligand>
</feature>
<feature type="modified residue" description="Pyruvic acid (Ser)" evidence="1">
    <location>
        <position position="25"/>
    </location>
</feature>
<organism>
    <name type="scientific">Syntrophomonas wolfei subsp. wolfei (strain DSM 2245B / Goettingen)</name>
    <dbReference type="NCBI Taxonomy" id="335541"/>
    <lineage>
        <taxon>Bacteria</taxon>
        <taxon>Bacillati</taxon>
        <taxon>Bacillota</taxon>
        <taxon>Clostridia</taxon>
        <taxon>Eubacteriales</taxon>
        <taxon>Syntrophomonadaceae</taxon>
        <taxon>Syntrophomonas</taxon>
    </lineage>
</organism>
<reference key="1">
    <citation type="journal article" date="2010" name="Environ. Microbiol.">
        <title>The genome of Syntrophomonas wolfei: new insights into syntrophic metabolism and biohydrogen production.</title>
        <authorList>
            <person name="Sieber J.R."/>
            <person name="Sims D.R."/>
            <person name="Han C."/>
            <person name="Kim E."/>
            <person name="Lykidis A."/>
            <person name="Lapidus A.L."/>
            <person name="McDonnald E."/>
            <person name="Rohlin L."/>
            <person name="Culley D.E."/>
            <person name="Gunsalus R."/>
            <person name="McInerney M.J."/>
        </authorList>
    </citation>
    <scope>NUCLEOTIDE SEQUENCE [LARGE SCALE GENOMIC DNA]</scope>
    <source>
        <strain>DSM 2245B / Goettingen</strain>
    </source>
</reference>
<name>PAND_SYNWW</name>
<evidence type="ECO:0000255" key="1">
    <source>
        <dbReference type="HAMAP-Rule" id="MF_00446"/>
    </source>
</evidence>
<proteinExistence type="inferred from homology"/>
<accession>Q0B0P4</accession>
<dbReference type="EC" id="4.1.1.11" evidence="1"/>
<dbReference type="EMBL" id="CP000448">
    <property type="protein sequence ID" value="ABI67460.1"/>
    <property type="molecule type" value="Genomic_DNA"/>
</dbReference>
<dbReference type="RefSeq" id="WP_011639571.1">
    <property type="nucleotide sequence ID" value="NC_008346.1"/>
</dbReference>
<dbReference type="SMR" id="Q0B0P4"/>
<dbReference type="STRING" id="335541.Swol_0103"/>
<dbReference type="KEGG" id="swo:Swol_0103"/>
<dbReference type="eggNOG" id="COG0853">
    <property type="taxonomic scope" value="Bacteria"/>
</dbReference>
<dbReference type="HOGENOM" id="CLU_115305_2_0_9"/>
<dbReference type="OrthoDB" id="9803983at2"/>
<dbReference type="UniPathway" id="UPA00028">
    <property type="reaction ID" value="UER00002"/>
</dbReference>
<dbReference type="Proteomes" id="UP000001968">
    <property type="component" value="Chromosome"/>
</dbReference>
<dbReference type="GO" id="GO:0005829">
    <property type="term" value="C:cytosol"/>
    <property type="evidence" value="ECO:0007669"/>
    <property type="project" value="TreeGrafter"/>
</dbReference>
<dbReference type="GO" id="GO:0004068">
    <property type="term" value="F:aspartate 1-decarboxylase activity"/>
    <property type="evidence" value="ECO:0007669"/>
    <property type="project" value="UniProtKB-UniRule"/>
</dbReference>
<dbReference type="GO" id="GO:0006523">
    <property type="term" value="P:alanine biosynthetic process"/>
    <property type="evidence" value="ECO:0007669"/>
    <property type="project" value="InterPro"/>
</dbReference>
<dbReference type="GO" id="GO:0015940">
    <property type="term" value="P:pantothenate biosynthetic process"/>
    <property type="evidence" value="ECO:0007669"/>
    <property type="project" value="UniProtKB-UniRule"/>
</dbReference>
<dbReference type="CDD" id="cd06919">
    <property type="entry name" value="Asp_decarbox"/>
    <property type="match status" value="1"/>
</dbReference>
<dbReference type="Gene3D" id="2.40.40.20">
    <property type="match status" value="1"/>
</dbReference>
<dbReference type="HAMAP" id="MF_00446">
    <property type="entry name" value="PanD"/>
    <property type="match status" value="1"/>
</dbReference>
<dbReference type="InterPro" id="IPR009010">
    <property type="entry name" value="Asp_de-COase-like_dom_sf"/>
</dbReference>
<dbReference type="InterPro" id="IPR003190">
    <property type="entry name" value="Asp_decarbox"/>
</dbReference>
<dbReference type="NCBIfam" id="TIGR00223">
    <property type="entry name" value="panD"/>
    <property type="match status" value="1"/>
</dbReference>
<dbReference type="PANTHER" id="PTHR21012">
    <property type="entry name" value="ASPARTATE 1-DECARBOXYLASE"/>
    <property type="match status" value="1"/>
</dbReference>
<dbReference type="PANTHER" id="PTHR21012:SF0">
    <property type="entry name" value="ASPARTATE 1-DECARBOXYLASE"/>
    <property type="match status" value="1"/>
</dbReference>
<dbReference type="Pfam" id="PF02261">
    <property type="entry name" value="Asp_decarbox"/>
    <property type="match status" value="1"/>
</dbReference>
<dbReference type="PIRSF" id="PIRSF006246">
    <property type="entry name" value="Asp_decarbox"/>
    <property type="match status" value="1"/>
</dbReference>
<dbReference type="SUPFAM" id="SSF50692">
    <property type="entry name" value="ADC-like"/>
    <property type="match status" value="1"/>
</dbReference>